<organism>
    <name type="scientific">Escherichia coli (strain K12)</name>
    <dbReference type="NCBI Taxonomy" id="83333"/>
    <lineage>
        <taxon>Bacteria</taxon>
        <taxon>Pseudomonadati</taxon>
        <taxon>Pseudomonadota</taxon>
        <taxon>Gammaproteobacteria</taxon>
        <taxon>Enterobacterales</taxon>
        <taxon>Enterobacteriaceae</taxon>
        <taxon>Escherichia</taxon>
    </lineage>
</organism>
<name>UCPA_ECOLI</name>
<protein>
    <recommendedName>
        <fullName>Oxidoreductase UcpA</fullName>
        <ecNumber>1.-.-.-</ecNumber>
    </recommendedName>
</protein>
<dbReference type="EC" id="1.-.-.-"/>
<dbReference type="EMBL" id="X99908">
    <property type="protein sequence ID" value="CAA68181.1"/>
    <property type="molecule type" value="Genomic_DNA"/>
</dbReference>
<dbReference type="EMBL" id="U00096">
    <property type="protein sequence ID" value="AAC75479.2"/>
    <property type="molecule type" value="Genomic_DNA"/>
</dbReference>
<dbReference type="EMBL" id="AP009048">
    <property type="protein sequence ID" value="BAA16309.2"/>
    <property type="molecule type" value="Genomic_DNA"/>
</dbReference>
<dbReference type="EMBL" id="M32101">
    <property type="status" value="NOT_ANNOTATED_CDS"/>
    <property type="molecule type" value="Genomic_DNA"/>
</dbReference>
<dbReference type="PIR" id="A65017">
    <property type="entry name" value="A65017"/>
</dbReference>
<dbReference type="RefSeq" id="NP_416921.4">
    <property type="nucleotide sequence ID" value="NC_000913.3"/>
</dbReference>
<dbReference type="RefSeq" id="WP_000517431.1">
    <property type="nucleotide sequence ID" value="NZ_STEB01000039.1"/>
</dbReference>
<dbReference type="SMR" id="P37440"/>
<dbReference type="BioGRID" id="4260683">
    <property type="interactions" value="16"/>
</dbReference>
<dbReference type="DIP" id="DIP-11073N"/>
<dbReference type="FunCoup" id="P37440">
    <property type="interactions" value="141"/>
</dbReference>
<dbReference type="IntAct" id="P37440">
    <property type="interactions" value="3"/>
</dbReference>
<dbReference type="STRING" id="511145.b2426"/>
<dbReference type="jPOST" id="P37440"/>
<dbReference type="PaxDb" id="511145-b2426"/>
<dbReference type="EnsemblBacteria" id="AAC75479">
    <property type="protein sequence ID" value="AAC75479"/>
    <property type="gene ID" value="b2426"/>
</dbReference>
<dbReference type="GeneID" id="75204304"/>
<dbReference type="GeneID" id="946898"/>
<dbReference type="KEGG" id="ecj:JW5394"/>
<dbReference type="KEGG" id="eco:b2426"/>
<dbReference type="KEGG" id="ecoc:C3026_13480"/>
<dbReference type="PATRIC" id="fig|1411691.4.peg.4305"/>
<dbReference type="EchoBASE" id="EB2054"/>
<dbReference type="eggNOG" id="COG1028">
    <property type="taxonomic scope" value="Bacteria"/>
</dbReference>
<dbReference type="HOGENOM" id="CLU_010194_1_0_6"/>
<dbReference type="InParanoid" id="P37440"/>
<dbReference type="OMA" id="YMTGTDF"/>
<dbReference type="OrthoDB" id="9806974at2"/>
<dbReference type="PhylomeDB" id="P37440"/>
<dbReference type="BioCyc" id="EcoCyc:EG12133-MONOMER"/>
<dbReference type="BioCyc" id="MetaCyc:EG12133-MONOMER"/>
<dbReference type="PRO" id="PR:P37440"/>
<dbReference type="Proteomes" id="UP000000625">
    <property type="component" value="Chromosome"/>
</dbReference>
<dbReference type="GO" id="GO:0052588">
    <property type="term" value="F:diacetyl reductase ((S)-acetoin forming) (NAD+) activity"/>
    <property type="evidence" value="ECO:0000314"/>
    <property type="project" value="EcoCyc"/>
</dbReference>
<dbReference type="CDD" id="cd05368">
    <property type="entry name" value="DHRS6_like_SDR_c"/>
    <property type="match status" value="1"/>
</dbReference>
<dbReference type="FunFam" id="3.40.50.720:FF:000084">
    <property type="entry name" value="Short-chain dehydrogenase reductase"/>
    <property type="match status" value="1"/>
</dbReference>
<dbReference type="Gene3D" id="3.40.50.720">
    <property type="entry name" value="NAD(P)-binding Rossmann-like Domain"/>
    <property type="match status" value="1"/>
</dbReference>
<dbReference type="InterPro" id="IPR036291">
    <property type="entry name" value="NAD(P)-bd_dom_sf"/>
</dbReference>
<dbReference type="InterPro" id="IPR002347">
    <property type="entry name" value="SDR_fam"/>
</dbReference>
<dbReference type="NCBIfam" id="NF005559">
    <property type="entry name" value="PRK07231.1"/>
    <property type="match status" value="1"/>
</dbReference>
<dbReference type="NCBIfam" id="NF006080">
    <property type="entry name" value="PRK08226.1"/>
    <property type="match status" value="1"/>
</dbReference>
<dbReference type="PANTHER" id="PTHR42760:SF133">
    <property type="entry name" value="3-OXOACYL-[ACYL-CARRIER-PROTEIN] REDUCTASE"/>
    <property type="match status" value="1"/>
</dbReference>
<dbReference type="PANTHER" id="PTHR42760">
    <property type="entry name" value="SHORT-CHAIN DEHYDROGENASES/REDUCTASES FAMILY MEMBER"/>
    <property type="match status" value="1"/>
</dbReference>
<dbReference type="Pfam" id="PF13561">
    <property type="entry name" value="adh_short_C2"/>
    <property type="match status" value="1"/>
</dbReference>
<dbReference type="PRINTS" id="PR00081">
    <property type="entry name" value="GDHRDH"/>
</dbReference>
<dbReference type="PRINTS" id="PR00080">
    <property type="entry name" value="SDRFAMILY"/>
</dbReference>
<dbReference type="SMART" id="SM00822">
    <property type="entry name" value="PKS_KR"/>
    <property type="match status" value="1"/>
</dbReference>
<dbReference type="SUPFAM" id="SSF51735">
    <property type="entry name" value="NAD(P)-binding Rossmann-fold domains"/>
    <property type="match status" value="1"/>
</dbReference>
<gene>
    <name type="primary">ucpA</name>
    <name type="synonym">yfeF</name>
    <name type="ordered locus">b2426</name>
    <name type="ordered locus">JW5394</name>
</gene>
<keyword id="KW-0560">Oxidoreductase</keyword>
<keyword id="KW-1185">Reference proteome</keyword>
<evidence type="ECO:0000250" key="1"/>
<evidence type="ECO:0000305" key="2"/>
<feature type="chain" id="PRO_0000054801" description="Oxidoreductase UcpA">
    <location>
        <begin position="1"/>
        <end position="263"/>
    </location>
</feature>
<feature type="active site" description="Proton acceptor" evidence="1">
    <location>
        <position position="155"/>
    </location>
</feature>
<feature type="binding site" evidence="1">
    <location>
        <begin position="10"/>
        <end position="32"/>
    </location>
    <ligand>
        <name>NAD(+)</name>
        <dbReference type="ChEBI" id="CHEBI:57540"/>
    </ligand>
</feature>
<feature type="binding site" evidence="1">
    <location>
        <position position="141"/>
    </location>
    <ligand>
        <name>substrate</name>
    </ligand>
</feature>
<feature type="sequence conflict" description="In Ref. 1; CAA68181." evidence="2" ref="1">
    <original>T</original>
    <variation>Q</variation>
    <location>
        <position position="153"/>
    </location>
</feature>
<comment type="interaction">
    <interactant intactId="EBI-559387">
        <id>P37440</id>
    </interactant>
    <interactant intactId="EBI-554405">
        <id>P0A796</id>
        <label>pfkA</label>
    </interactant>
    <organismsDiffer>false</organismsDiffer>
    <experiments>2</experiments>
</comment>
<comment type="similarity">
    <text evidence="2">Belongs to the short-chain dehydrogenases/reductases (SDR) family.</text>
</comment>
<sequence length="263" mass="27850">MGKLTGKTALITGALQGIGEGIARTFARHGANLILLDISPEIEKLADELCGRGHRCTAVVADVRDPASVAAAIKRAKEKEGRIDILVNNAGVCRLGSFLDMSDDDRDFHIDINIKGVWNVTKAVLPEMIARKDGRIVMMSSVTGDMVADPGETAYALTKAAIVGLTKSLAVEYAQSGIRVNAICPGYVRTPMAESIARQSNPEDPESVLTEMAKAIPMRRLADPLEVGELAAFLASDESSYLTGTQNVIDGGSTLPETVSVGI</sequence>
<reference key="1">
    <citation type="journal article" date="1997" name="Acta Biochim. Pol.">
        <title>Characterization of the Escherichia coli gene encoding a new member of the short-chain dehydrogenase/reductase (SDR) family.</title>
        <authorList>
            <person name="Sirko A."/>
            <person name="Weglenska A."/>
            <person name="Hryniewicz M.M."/>
            <person name="Hulanicka D.M."/>
        </authorList>
    </citation>
    <scope>NUCLEOTIDE SEQUENCE [GENOMIC DNA]</scope>
    <source>
        <strain>K12</strain>
    </source>
</reference>
<reference key="2">
    <citation type="journal article" date="1997" name="DNA Res.">
        <title>Construction of a contiguous 874-kb sequence of the Escherichia coli-K12 genome corresponding to 50.0-68.8 min on the linkage map and analysis of its sequence features.</title>
        <authorList>
            <person name="Yamamoto Y."/>
            <person name="Aiba H."/>
            <person name="Baba T."/>
            <person name="Hayashi K."/>
            <person name="Inada T."/>
            <person name="Isono K."/>
            <person name="Itoh T."/>
            <person name="Kimura S."/>
            <person name="Kitagawa M."/>
            <person name="Makino K."/>
            <person name="Miki T."/>
            <person name="Mitsuhashi N."/>
            <person name="Mizobuchi K."/>
            <person name="Mori H."/>
            <person name="Nakade S."/>
            <person name="Nakamura Y."/>
            <person name="Nashimoto H."/>
            <person name="Oshima T."/>
            <person name="Oyama S."/>
            <person name="Saito N."/>
            <person name="Sampei G."/>
            <person name="Satoh Y."/>
            <person name="Sivasundaram S."/>
            <person name="Tagami H."/>
            <person name="Takahashi H."/>
            <person name="Takeda J."/>
            <person name="Takemoto K."/>
            <person name="Uehara K."/>
            <person name="Wada C."/>
            <person name="Yamagata S."/>
            <person name="Horiuchi T."/>
        </authorList>
    </citation>
    <scope>NUCLEOTIDE SEQUENCE [LARGE SCALE GENOMIC DNA]</scope>
    <source>
        <strain>K12 / W3110 / ATCC 27325 / DSM 5911</strain>
    </source>
</reference>
<reference key="3">
    <citation type="journal article" date="1997" name="Science">
        <title>The complete genome sequence of Escherichia coli K-12.</title>
        <authorList>
            <person name="Blattner F.R."/>
            <person name="Plunkett G. III"/>
            <person name="Bloch C.A."/>
            <person name="Perna N.T."/>
            <person name="Burland V."/>
            <person name="Riley M."/>
            <person name="Collado-Vides J."/>
            <person name="Glasner J.D."/>
            <person name="Rode C.K."/>
            <person name="Mayhew G.F."/>
            <person name="Gregor J."/>
            <person name="Davis N.W."/>
            <person name="Kirkpatrick H.A."/>
            <person name="Goeden M.A."/>
            <person name="Rose D.J."/>
            <person name="Mau B."/>
            <person name="Shao Y."/>
        </authorList>
    </citation>
    <scope>NUCLEOTIDE SEQUENCE [LARGE SCALE GENOMIC DNA]</scope>
    <source>
        <strain>K12 / MG1655 / ATCC 47076</strain>
    </source>
</reference>
<reference key="4">
    <citation type="journal article" date="2006" name="Mol. Syst. Biol.">
        <title>Highly accurate genome sequences of Escherichia coli K-12 strains MG1655 and W3110.</title>
        <authorList>
            <person name="Hayashi K."/>
            <person name="Morooka N."/>
            <person name="Yamamoto Y."/>
            <person name="Fujita K."/>
            <person name="Isono K."/>
            <person name="Choi S."/>
            <person name="Ohtsubo E."/>
            <person name="Baba T."/>
            <person name="Wanner B.L."/>
            <person name="Mori H."/>
            <person name="Horiuchi T."/>
        </authorList>
    </citation>
    <scope>NUCLEOTIDE SEQUENCE [LARGE SCALE GENOMIC DNA]</scope>
    <source>
        <strain>K12 / W3110 / ATCC 27325 / DSM 5911</strain>
    </source>
</reference>
<reference key="5">
    <citation type="journal article" date="1990" name="J. Bacteriol.">
        <title>Sulfate and thiosulfate transport in Escherichia coli K-12: identification of a gene encoding a novel protein involved in thiosulfate binding.</title>
        <authorList>
            <person name="Hryniewicz M.M."/>
            <person name="Sirko A."/>
            <person name="Palucha A."/>
            <person name="Boeck A."/>
            <person name="Hulanicka D.M."/>
        </authorList>
    </citation>
    <scope>NUCLEOTIDE SEQUENCE [GENOMIC DNA] OF 180-263</scope>
    <source>
        <strain>K12</strain>
    </source>
</reference>
<reference key="6">
    <citation type="journal article" date="1994" name="Nucleic Acids Res.">
        <title>Intrinsic and extrinsic approaches for detecting genes in a bacterial genome.</title>
        <authorList>
            <person name="Borodovsky M."/>
            <person name="Rudd K.E."/>
            <person name="Koonin E.V."/>
        </authorList>
    </citation>
    <scope>IDENTIFICATION</scope>
</reference>
<accession>P37440</accession>
<accession>P76963</accession>
<accession>P77140</accession>
<accession>P77442</accession>
<proteinExistence type="evidence at protein level"/>